<gene>
    <name evidence="4" type="primary">CYP71BQ4</name>
    <name evidence="6" type="ORF">CISIN_1g010334mg</name>
</gene>
<comment type="function">
    <text evidence="3">Monooxygenase involved in the biosynthesis of limonoids triterpene natural products such as limonin, a compound with insecticidal activity responsible for the bitter taste in citrus (PubMed:31371503). Catalyzes the conversion of dihydroniloticin to the protolimonoid melianol (PubMed:31371503).</text>
</comment>
<comment type="catalytic activity">
    <reaction evidence="3">
        <text>dihydroniloticin + 2 reduced [NADPH--hemoprotein reductase] + 2 O2 = melianol + 2 oxidized [NADPH--hemoprotein reductase] + 3 H2O + 2 H(+)</text>
        <dbReference type="Rhea" id="RHEA:80283"/>
        <dbReference type="Rhea" id="RHEA-COMP:11964"/>
        <dbReference type="Rhea" id="RHEA-COMP:11965"/>
        <dbReference type="ChEBI" id="CHEBI:15377"/>
        <dbReference type="ChEBI" id="CHEBI:15378"/>
        <dbReference type="ChEBI" id="CHEBI:15379"/>
        <dbReference type="ChEBI" id="CHEBI:57618"/>
        <dbReference type="ChEBI" id="CHEBI:58210"/>
        <dbReference type="ChEBI" id="CHEBI:231450"/>
        <dbReference type="ChEBI" id="CHEBI:231451"/>
    </reaction>
    <physiologicalReaction direction="left-to-right" evidence="3">
        <dbReference type="Rhea" id="RHEA:80284"/>
    </physiologicalReaction>
</comment>
<comment type="cofactor">
    <cofactor evidence="1">
        <name>heme</name>
        <dbReference type="ChEBI" id="CHEBI:30413"/>
    </cofactor>
</comment>
<comment type="pathway">
    <text evidence="3">Secondary metabolite biosynthesis; terpenoid biosynthesis.</text>
</comment>
<comment type="subcellular location">
    <subcellularLocation>
        <location evidence="2">Membrane</location>
        <topology evidence="2">Single-pass membrane protein</topology>
    </subcellularLocation>
</comment>
<comment type="tissue specificity">
    <text evidence="3">Accumulates in mature fruits and in juice vesicles.</text>
</comment>
<comment type="similarity">
    <text evidence="5">Belongs to the cytochrome P450 family.</text>
</comment>
<evidence type="ECO:0000250" key="1">
    <source>
        <dbReference type="UniProtKB" id="Q96242"/>
    </source>
</evidence>
<evidence type="ECO:0000255" key="2"/>
<evidence type="ECO:0000269" key="3">
    <source>
    </source>
</evidence>
<evidence type="ECO:0000303" key="4">
    <source>
    </source>
</evidence>
<evidence type="ECO:0000305" key="5"/>
<evidence type="ECO:0000312" key="6">
    <source>
        <dbReference type="EMBL" id="KDO58402.1"/>
    </source>
</evidence>
<protein>
    <recommendedName>
        <fullName evidence="4">Melianol synthase CYP71BQ4</fullName>
        <ecNumber evidence="4">1.14.14.-</ecNumber>
    </recommendedName>
    <alternativeName>
        <fullName evidence="4">Cytochrome P450 family 71 subfamily BQ polypeptide 4</fullName>
        <shortName evidence="4">CsCYP71BQ4</shortName>
    </alternativeName>
</protein>
<dbReference type="EC" id="1.14.14.-" evidence="4"/>
<dbReference type="EMBL" id="KK784949">
    <property type="protein sequence ID" value="KDO58402.1"/>
    <property type="molecule type" value="Genomic_DNA"/>
</dbReference>
<dbReference type="SMR" id="A0A067F4I6"/>
<dbReference type="PaxDb" id="2711-XP_006469495-1"/>
<dbReference type="eggNOG" id="KOG0156">
    <property type="taxonomic scope" value="Eukaryota"/>
</dbReference>
<dbReference type="UniPathway" id="UPA00213"/>
<dbReference type="Proteomes" id="UP000027120">
    <property type="component" value="Unassembled WGS sequence"/>
</dbReference>
<dbReference type="GO" id="GO:0016020">
    <property type="term" value="C:membrane"/>
    <property type="evidence" value="ECO:0007669"/>
    <property type="project" value="UniProtKB-SubCell"/>
</dbReference>
<dbReference type="GO" id="GO:0020037">
    <property type="term" value="F:heme binding"/>
    <property type="evidence" value="ECO:0007669"/>
    <property type="project" value="InterPro"/>
</dbReference>
<dbReference type="GO" id="GO:0005506">
    <property type="term" value="F:iron ion binding"/>
    <property type="evidence" value="ECO:0007669"/>
    <property type="project" value="InterPro"/>
</dbReference>
<dbReference type="GO" id="GO:0004497">
    <property type="term" value="F:monooxygenase activity"/>
    <property type="evidence" value="ECO:0007669"/>
    <property type="project" value="UniProtKB-KW"/>
</dbReference>
<dbReference type="GO" id="GO:0016705">
    <property type="term" value="F:oxidoreductase activity, acting on paired donors, with incorporation or reduction of molecular oxygen"/>
    <property type="evidence" value="ECO:0007669"/>
    <property type="project" value="InterPro"/>
</dbReference>
<dbReference type="CDD" id="cd11072">
    <property type="entry name" value="CYP71-like"/>
    <property type="match status" value="1"/>
</dbReference>
<dbReference type="FunFam" id="1.10.630.10:FF:000043">
    <property type="entry name" value="Cytochrome P450 99A2"/>
    <property type="match status" value="1"/>
</dbReference>
<dbReference type="Gene3D" id="1.10.630.10">
    <property type="entry name" value="Cytochrome P450"/>
    <property type="match status" value="1"/>
</dbReference>
<dbReference type="InterPro" id="IPR001128">
    <property type="entry name" value="Cyt_P450"/>
</dbReference>
<dbReference type="InterPro" id="IPR017972">
    <property type="entry name" value="Cyt_P450_CS"/>
</dbReference>
<dbReference type="InterPro" id="IPR002401">
    <property type="entry name" value="Cyt_P450_E_grp-I"/>
</dbReference>
<dbReference type="InterPro" id="IPR036396">
    <property type="entry name" value="Cyt_P450_sf"/>
</dbReference>
<dbReference type="PANTHER" id="PTHR47955:SF8">
    <property type="entry name" value="CYTOCHROME P450 71D11-LIKE"/>
    <property type="match status" value="1"/>
</dbReference>
<dbReference type="PANTHER" id="PTHR47955">
    <property type="entry name" value="CYTOCHROME P450 FAMILY 71 PROTEIN"/>
    <property type="match status" value="1"/>
</dbReference>
<dbReference type="Pfam" id="PF00067">
    <property type="entry name" value="p450"/>
    <property type="match status" value="1"/>
</dbReference>
<dbReference type="PRINTS" id="PR00463">
    <property type="entry name" value="EP450I"/>
</dbReference>
<dbReference type="PRINTS" id="PR00385">
    <property type="entry name" value="P450"/>
</dbReference>
<dbReference type="SUPFAM" id="SSF48264">
    <property type="entry name" value="Cytochrome P450"/>
    <property type="match status" value="1"/>
</dbReference>
<dbReference type="PROSITE" id="PS00086">
    <property type="entry name" value="CYTOCHROME_P450"/>
    <property type="match status" value="1"/>
</dbReference>
<name>C1BQ4_CITSI</name>
<feature type="chain" id="PRO_0000461367" description="Melianol synthase CYP71BQ4">
    <location>
        <begin position="1"/>
        <end position="513"/>
    </location>
</feature>
<feature type="transmembrane region" description="Helical" evidence="2">
    <location>
        <begin position="10"/>
        <end position="30"/>
    </location>
</feature>
<feature type="binding site" description="axial binding residue" evidence="1">
    <location>
        <position position="451"/>
    </location>
    <ligand>
        <name>heme</name>
        <dbReference type="ChEBI" id="CHEBI:30413"/>
    </ligand>
    <ligandPart>
        <name>Fe</name>
        <dbReference type="ChEBI" id="CHEBI:18248"/>
    </ligandPart>
</feature>
<accession>A0A067F4I6</accession>
<proteinExistence type="evidence at protein level"/>
<reference key="1">
    <citation type="submission" date="2014-04" db="EMBL/GenBank/DDBJ databases">
        <authorList>
            <consortium name="International Citrus Genome Consortium"/>
            <person name="Gmitter F."/>
            <person name="Chen C."/>
            <person name="Farmerie W."/>
            <person name="Harkins T."/>
            <person name="Desany B."/>
            <person name="Mohiuddin M."/>
            <person name="Kodira C."/>
            <person name="Borodovsky M."/>
            <person name="Lomsadze A."/>
            <person name="Burns P."/>
            <person name="Jenkins J."/>
            <person name="Prochnik S."/>
            <person name="Shu S."/>
            <person name="Chapman J."/>
            <person name="Pitluck S."/>
            <person name="Schmutz J."/>
            <person name="Rokhsar D."/>
        </authorList>
    </citation>
    <scope>NUCLEOTIDE SEQUENCE [LARGE SCALE GENOMIC DNA]</scope>
    <source>
        <strain>cv. Ridge Pineapple sweet orange</strain>
    </source>
</reference>
<reference key="2">
    <citation type="journal article" date="2019" name="Proc. Natl. Acad. Sci. U.S.A.">
        <title>Identification of key enzymes responsible for protolimonoid biosynthesis in plants: Opening the door to azadirachtin production.</title>
        <authorList>
            <person name="Hodgson H."/>
            <person name="De La Pena R."/>
            <person name="Stephenson M.J."/>
            <person name="Thimmappa R."/>
            <person name="Vincent J.L."/>
            <person name="Sattely E.S."/>
            <person name="Osbourn A."/>
        </authorList>
    </citation>
    <scope>FUNCTION</scope>
    <scope>CATALYTIC ACTIVITY</scope>
    <scope>PATHWAY</scope>
    <scope>TISSUE SPECIFICITY</scope>
    <source>
        <strain>cv. Valencia</strain>
    </source>
</reference>
<sequence>MDTTTTATQMLHLPSLPVLLSFLLFLLMLIRYWKNSNGQGKQPPGPKPLPILGNLHQLADGQPHHVMTKLCRKYGPVMKLKLGQLDAVIISSPEAAKEVLKTNEIKFAQRPEVYAVEIMSYDHSSIVFAPYGDYWREMRKISVLELLSNKRVQSFRSIREDEVWGLVEFISSNQGRPINLSEKIFTMTNDIIARAAFGRKNSDQHNFTVLLEEIMKIGAGFAIADLYPSLTFLRPLTGVKPALMRIQKKMDKILEDIVAEHKLKRKAAANNNVKLEEEDLVDTLLNYAEATNKNEFHLTIDQVKAVTLDIFSAGSETSATSMEWAMSELLKNPRVMKKAQEEVRQACKGKSKIQEADIQKLDYLKLVIKETFRLHAPGPFTPREAREKCEIRGYTIPAKAKILINLHAIGRDPTVWKDPECFRPERFEGSSTDFKGNHFELIPFGGGRRICPGISFATANIELGLAQLMYHFDWKLANGERLEDLDMSENFGMTARRKENLQVIATTRIPFEK</sequence>
<organism>
    <name type="scientific">Citrus sinensis</name>
    <name type="common">Sweet orange</name>
    <name type="synonym">Citrus aurantium var. sinensis</name>
    <dbReference type="NCBI Taxonomy" id="2711"/>
    <lineage>
        <taxon>Eukaryota</taxon>
        <taxon>Viridiplantae</taxon>
        <taxon>Streptophyta</taxon>
        <taxon>Embryophyta</taxon>
        <taxon>Tracheophyta</taxon>
        <taxon>Spermatophyta</taxon>
        <taxon>Magnoliopsida</taxon>
        <taxon>eudicotyledons</taxon>
        <taxon>Gunneridae</taxon>
        <taxon>Pentapetalae</taxon>
        <taxon>rosids</taxon>
        <taxon>malvids</taxon>
        <taxon>Sapindales</taxon>
        <taxon>Rutaceae</taxon>
        <taxon>Aurantioideae</taxon>
        <taxon>Citrus</taxon>
    </lineage>
</organism>
<keyword id="KW-0349">Heme</keyword>
<keyword id="KW-0408">Iron</keyword>
<keyword id="KW-0472">Membrane</keyword>
<keyword id="KW-0479">Metal-binding</keyword>
<keyword id="KW-0503">Monooxygenase</keyword>
<keyword id="KW-0560">Oxidoreductase</keyword>
<keyword id="KW-1185">Reference proteome</keyword>
<keyword id="KW-0812">Transmembrane</keyword>
<keyword id="KW-1133">Transmembrane helix</keyword>